<sequence>MALAKRIIPCLDVDNGRVVKGVKFENIRDAGDPVEIARRYDEQGADEITFLDITASVDGRDTTLHTVERMASQVFIPLTVGGGVRSVQDIRNLLNAGADKVSINTAAVFNPEFVGEAAERFGSQCIVVAIDAKKVSAPGEAPRWEIFTHGGRKPTGLDAVLWAKKMEDLGAGEILLTSMDQDGVKSGYDLGVTRAISEAVNVPVIASGGVGNLEHLAAGILEGKADAVLAASIFHFGEYTVPEAKAYLASRGIVVR</sequence>
<keyword id="KW-0028">Amino-acid biosynthesis</keyword>
<keyword id="KW-0963">Cytoplasm</keyword>
<keyword id="KW-0368">Histidine biosynthesis</keyword>
<keyword id="KW-0456">Lyase</keyword>
<accession>A6VDQ9</accession>
<feature type="chain" id="PRO_1000063117" description="Imidazole glycerol phosphate synthase subunit HisF">
    <location>
        <begin position="1"/>
        <end position="256"/>
    </location>
</feature>
<feature type="active site" evidence="1">
    <location>
        <position position="12"/>
    </location>
</feature>
<feature type="active site" evidence="1">
    <location>
        <position position="131"/>
    </location>
</feature>
<organism>
    <name type="scientific">Pseudomonas paraeruginosa (strain DSM 24068 / PA7)</name>
    <name type="common">Pseudomonas aeruginosa (strain PA7)</name>
    <dbReference type="NCBI Taxonomy" id="381754"/>
    <lineage>
        <taxon>Bacteria</taxon>
        <taxon>Pseudomonadati</taxon>
        <taxon>Pseudomonadota</taxon>
        <taxon>Gammaproteobacteria</taxon>
        <taxon>Pseudomonadales</taxon>
        <taxon>Pseudomonadaceae</taxon>
        <taxon>Pseudomonas</taxon>
        <taxon>Pseudomonas paraeruginosa</taxon>
    </lineage>
</organism>
<comment type="function">
    <text evidence="1">IGPS catalyzes the conversion of PRFAR and glutamine to IGP, AICAR and glutamate. The HisF subunit catalyzes the cyclization activity that produces IGP and AICAR from PRFAR using the ammonia provided by the HisH subunit.</text>
</comment>
<comment type="catalytic activity">
    <reaction evidence="1">
        <text>5-[(5-phospho-1-deoxy-D-ribulos-1-ylimino)methylamino]-1-(5-phospho-beta-D-ribosyl)imidazole-4-carboxamide + L-glutamine = D-erythro-1-(imidazol-4-yl)glycerol 3-phosphate + 5-amino-1-(5-phospho-beta-D-ribosyl)imidazole-4-carboxamide + L-glutamate + H(+)</text>
        <dbReference type="Rhea" id="RHEA:24793"/>
        <dbReference type="ChEBI" id="CHEBI:15378"/>
        <dbReference type="ChEBI" id="CHEBI:29985"/>
        <dbReference type="ChEBI" id="CHEBI:58278"/>
        <dbReference type="ChEBI" id="CHEBI:58359"/>
        <dbReference type="ChEBI" id="CHEBI:58475"/>
        <dbReference type="ChEBI" id="CHEBI:58525"/>
        <dbReference type="EC" id="4.3.2.10"/>
    </reaction>
</comment>
<comment type="pathway">
    <text evidence="1">Amino-acid biosynthesis; L-histidine biosynthesis; L-histidine from 5-phospho-alpha-D-ribose 1-diphosphate: step 5/9.</text>
</comment>
<comment type="subunit">
    <text evidence="1">Heterodimer of HisH and HisF.</text>
</comment>
<comment type="subcellular location">
    <subcellularLocation>
        <location evidence="1">Cytoplasm</location>
    </subcellularLocation>
</comment>
<comment type="similarity">
    <text evidence="1">Belongs to the HisA/HisF family.</text>
</comment>
<proteinExistence type="inferred from homology"/>
<evidence type="ECO:0000255" key="1">
    <source>
        <dbReference type="HAMAP-Rule" id="MF_01013"/>
    </source>
</evidence>
<name>HIS6_PSEP7</name>
<protein>
    <recommendedName>
        <fullName evidence="1">Imidazole glycerol phosphate synthase subunit HisF</fullName>
        <ecNumber evidence="1">4.3.2.10</ecNumber>
    </recommendedName>
    <alternativeName>
        <fullName evidence="1">IGP synthase cyclase subunit</fullName>
    </alternativeName>
    <alternativeName>
        <fullName evidence="1">IGP synthase subunit HisF</fullName>
    </alternativeName>
    <alternativeName>
        <fullName evidence="1">ImGP synthase subunit HisF</fullName>
        <shortName evidence="1">IGPS subunit HisF</shortName>
    </alternativeName>
</protein>
<dbReference type="EC" id="4.3.2.10" evidence="1"/>
<dbReference type="EMBL" id="CP000744">
    <property type="protein sequence ID" value="ABR80727.1"/>
    <property type="molecule type" value="Genomic_DNA"/>
</dbReference>
<dbReference type="RefSeq" id="WP_012077786.1">
    <property type="nucleotide sequence ID" value="NC_009656.1"/>
</dbReference>
<dbReference type="SMR" id="A6VDQ9"/>
<dbReference type="GeneID" id="77223668"/>
<dbReference type="KEGG" id="pap:PSPA7_5875"/>
<dbReference type="HOGENOM" id="CLU_048577_4_0_6"/>
<dbReference type="UniPathway" id="UPA00031">
    <property type="reaction ID" value="UER00010"/>
</dbReference>
<dbReference type="Proteomes" id="UP000001582">
    <property type="component" value="Chromosome"/>
</dbReference>
<dbReference type="GO" id="GO:0005737">
    <property type="term" value="C:cytoplasm"/>
    <property type="evidence" value="ECO:0007669"/>
    <property type="project" value="UniProtKB-SubCell"/>
</dbReference>
<dbReference type="GO" id="GO:0000107">
    <property type="term" value="F:imidazoleglycerol-phosphate synthase activity"/>
    <property type="evidence" value="ECO:0007669"/>
    <property type="project" value="UniProtKB-UniRule"/>
</dbReference>
<dbReference type="GO" id="GO:0016829">
    <property type="term" value="F:lyase activity"/>
    <property type="evidence" value="ECO:0007669"/>
    <property type="project" value="UniProtKB-KW"/>
</dbReference>
<dbReference type="GO" id="GO:0000105">
    <property type="term" value="P:L-histidine biosynthetic process"/>
    <property type="evidence" value="ECO:0007669"/>
    <property type="project" value="UniProtKB-UniRule"/>
</dbReference>
<dbReference type="CDD" id="cd04731">
    <property type="entry name" value="HisF"/>
    <property type="match status" value="1"/>
</dbReference>
<dbReference type="FunFam" id="3.20.20.70:FF:000006">
    <property type="entry name" value="Imidazole glycerol phosphate synthase subunit HisF"/>
    <property type="match status" value="1"/>
</dbReference>
<dbReference type="Gene3D" id="3.20.20.70">
    <property type="entry name" value="Aldolase class I"/>
    <property type="match status" value="1"/>
</dbReference>
<dbReference type="HAMAP" id="MF_01013">
    <property type="entry name" value="HisF"/>
    <property type="match status" value="1"/>
</dbReference>
<dbReference type="InterPro" id="IPR013785">
    <property type="entry name" value="Aldolase_TIM"/>
</dbReference>
<dbReference type="InterPro" id="IPR006062">
    <property type="entry name" value="His_biosynth"/>
</dbReference>
<dbReference type="InterPro" id="IPR004651">
    <property type="entry name" value="HisF"/>
</dbReference>
<dbReference type="InterPro" id="IPR050064">
    <property type="entry name" value="IGPS_HisA/HisF"/>
</dbReference>
<dbReference type="InterPro" id="IPR011060">
    <property type="entry name" value="RibuloseP-bd_barrel"/>
</dbReference>
<dbReference type="NCBIfam" id="TIGR00735">
    <property type="entry name" value="hisF"/>
    <property type="match status" value="1"/>
</dbReference>
<dbReference type="PANTHER" id="PTHR21235:SF2">
    <property type="entry name" value="IMIDAZOLE GLYCEROL PHOSPHATE SYNTHASE HISHF"/>
    <property type="match status" value="1"/>
</dbReference>
<dbReference type="PANTHER" id="PTHR21235">
    <property type="entry name" value="IMIDAZOLE GLYCEROL PHOSPHATE SYNTHASE SUBUNIT HISF/H IGP SYNTHASE SUBUNIT HISF/H"/>
    <property type="match status" value="1"/>
</dbReference>
<dbReference type="Pfam" id="PF00977">
    <property type="entry name" value="His_biosynth"/>
    <property type="match status" value="1"/>
</dbReference>
<dbReference type="SUPFAM" id="SSF51366">
    <property type="entry name" value="Ribulose-phoshate binding barrel"/>
    <property type="match status" value="1"/>
</dbReference>
<gene>
    <name evidence="1" type="primary">hisF</name>
    <name type="ordered locus">PSPA7_5875</name>
</gene>
<reference key="1">
    <citation type="submission" date="2007-06" db="EMBL/GenBank/DDBJ databases">
        <authorList>
            <person name="Dodson R.J."/>
            <person name="Harkins D."/>
            <person name="Paulsen I.T."/>
        </authorList>
    </citation>
    <scope>NUCLEOTIDE SEQUENCE [LARGE SCALE GENOMIC DNA]</scope>
    <source>
        <strain>DSM 24068 / PA7</strain>
    </source>
</reference>